<protein>
    <recommendedName>
        <fullName evidence="1">Large ribosomal subunit protein bL34</fullName>
    </recommendedName>
    <alternativeName>
        <fullName>50S ribosomal protein L34</fullName>
    </alternativeName>
</protein>
<feature type="chain" id="PRO_0000187423" description="Large ribosomal subunit protein bL34">
    <location>
        <begin position="1"/>
        <end position="47"/>
    </location>
</feature>
<organism>
    <name type="scientific">Mycolicibacterium smegmatis</name>
    <name type="common">Mycobacterium smegmatis</name>
    <dbReference type="NCBI Taxonomy" id="1772"/>
    <lineage>
        <taxon>Bacteria</taxon>
        <taxon>Bacillati</taxon>
        <taxon>Actinomycetota</taxon>
        <taxon>Actinomycetes</taxon>
        <taxon>Mycobacteriales</taxon>
        <taxon>Mycobacteriaceae</taxon>
        <taxon>Mycolicibacterium</taxon>
    </lineage>
</organism>
<name>RL34_MYCSM</name>
<sequence>MAKGKRTFQPNNRRRARVHGFRLRMRTRAGRAIVANRRSKGRRALTA</sequence>
<accession>P0C562</accession>
<accession>P49229</accession>
<gene>
    <name type="primary">rpmH</name>
</gene>
<proteinExistence type="evidence at protein level"/>
<dbReference type="EMBL" id="X92503">
    <property type="protein sequence ID" value="CAA63247.1"/>
    <property type="molecule type" value="Genomic_DNA"/>
</dbReference>
<dbReference type="PIR" id="S70985">
    <property type="entry name" value="S70985"/>
</dbReference>
<dbReference type="RefSeq" id="WP_003898363.1">
    <property type="nucleotide sequence ID" value="NZ_UGQO01000001.1"/>
</dbReference>
<dbReference type="PDB" id="7S0S">
    <property type="method" value="EM"/>
    <property type="resolution" value="3.05 A"/>
    <property type="chains" value="e=2-47"/>
</dbReference>
<dbReference type="PDBsum" id="7S0S"/>
<dbReference type="EMDB" id="EMD-24792"/>
<dbReference type="SMR" id="P0C562"/>
<dbReference type="GeneID" id="93461514"/>
<dbReference type="KEGG" id="msh:LI98_34290"/>
<dbReference type="KEGG" id="msn:LI99_34285"/>
<dbReference type="eggNOG" id="COG0230">
    <property type="taxonomic scope" value="Bacteria"/>
</dbReference>
<dbReference type="GO" id="GO:1990904">
    <property type="term" value="C:ribonucleoprotein complex"/>
    <property type="evidence" value="ECO:0007669"/>
    <property type="project" value="UniProtKB-KW"/>
</dbReference>
<dbReference type="GO" id="GO:0005840">
    <property type="term" value="C:ribosome"/>
    <property type="evidence" value="ECO:0007669"/>
    <property type="project" value="UniProtKB-KW"/>
</dbReference>
<dbReference type="GO" id="GO:0003735">
    <property type="term" value="F:structural constituent of ribosome"/>
    <property type="evidence" value="ECO:0007669"/>
    <property type="project" value="InterPro"/>
</dbReference>
<dbReference type="GO" id="GO:0006412">
    <property type="term" value="P:translation"/>
    <property type="evidence" value="ECO:0007669"/>
    <property type="project" value="UniProtKB-UniRule"/>
</dbReference>
<dbReference type="FunFam" id="1.10.287.3980:FF:000001">
    <property type="entry name" value="Mitochondrial ribosomal protein L34"/>
    <property type="match status" value="1"/>
</dbReference>
<dbReference type="Gene3D" id="1.10.287.3980">
    <property type="match status" value="1"/>
</dbReference>
<dbReference type="HAMAP" id="MF_00391">
    <property type="entry name" value="Ribosomal_bL34"/>
    <property type="match status" value="1"/>
</dbReference>
<dbReference type="InterPro" id="IPR000271">
    <property type="entry name" value="Ribosomal_bL34"/>
</dbReference>
<dbReference type="InterPro" id="IPR020939">
    <property type="entry name" value="Ribosomal_bL34_CS"/>
</dbReference>
<dbReference type="NCBIfam" id="TIGR01030">
    <property type="entry name" value="rpmH_bact"/>
    <property type="match status" value="1"/>
</dbReference>
<dbReference type="PANTHER" id="PTHR14503:SF4">
    <property type="entry name" value="LARGE RIBOSOMAL SUBUNIT PROTEIN BL34M"/>
    <property type="match status" value="1"/>
</dbReference>
<dbReference type="PANTHER" id="PTHR14503">
    <property type="entry name" value="MITOCHONDRIAL RIBOSOMAL PROTEIN 34 FAMILY MEMBER"/>
    <property type="match status" value="1"/>
</dbReference>
<dbReference type="Pfam" id="PF00468">
    <property type="entry name" value="Ribosomal_L34"/>
    <property type="match status" value="1"/>
</dbReference>
<dbReference type="PROSITE" id="PS00784">
    <property type="entry name" value="RIBOSOMAL_L34"/>
    <property type="match status" value="1"/>
</dbReference>
<reference key="1">
    <citation type="journal article" date="1996" name="Mol. Microbiol.">
        <title>Organization of the origins of replication of the chromosomes of Mycobacterium smegmatis, Mycobacterium leprae and Mycobacterium tuberculosis and isolation of a functional origin from M. smegmatis.</title>
        <authorList>
            <person name="Salazar L."/>
            <person name="Fsihi H."/>
            <person name="De Rossi E."/>
            <person name="Riccardi G."/>
            <person name="Rios C."/>
            <person name="Cole S.T."/>
            <person name="Takiff H.E."/>
        </authorList>
    </citation>
    <scope>NUCLEOTIDE SEQUENCE [GENOMIC DNA]</scope>
    <source>
        <strain>ATCC 607 / DSM 43465 / JCM 20379 / NBRC 3207 / NRRL B-692</strain>
    </source>
</reference>
<evidence type="ECO:0000305" key="1"/>
<keyword id="KW-0002">3D-structure</keyword>
<keyword id="KW-0687">Ribonucleoprotein</keyword>
<keyword id="KW-0689">Ribosomal protein</keyword>
<comment type="similarity">
    <text evidence="1">Belongs to the bacterial ribosomal protein bL34 family.</text>
</comment>